<keyword id="KW-0472">Membrane</keyword>
<keyword id="KW-1185">Reference proteome</keyword>
<keyword id="KW-0812">Transmembrane</keyword>
<keyword id="KW-1133">Transmembrane helix</keyword>
<keyword id="KW-0813">Transport</keyword>
<sequence length="516" mass="54646">MAGTMDRLEDCNSPETSGTAGDALPSPRVYARRWVFLLVVSLLSCSNAMLWLSFAPVADTIAQHFFLSMDQVNWLSLIYFVLSIPFGMAAIWVLDSVGLRGATILGAWLNFSGSVLRAVPCLPVRIPSPFAFFMSGQSLCALAQTLVVSSPAKLAALWFPEHQRATANMISTMSNPLGLLIANVLSPALVKKADDIPMMLGIYIGPAALACLLATVCLWESVPPTPPSTGAANSTSESFLRGLKLLIQNKAYVLLAVCFGGGIGVFSSFSALLEQILCASGYSNEFSGLCGALFIVFGILGALLLGLYVDRTKHFTEATKIGLCLTSMTSVAFALVSQLQGQTLALAAICSLFGLFGFSVAPVVMELAVECSFPVGEGASAGLIFVLGQAEGMLIMLLLTALTVRRTGPSFSTCQQGEDPLDWTVSLLLLAGLCTLFTCVLVIFFNTPYRRLEAESGGSSSPTMCARDPRTVSPTQVPPLETPGLTPPDEALKEAPGPASVSKGHSEWAETMPRDV</sequence>
<protein>
    <recommendedName>
        <fullName>Solute carrier family 49 member A3</fullName>
    </recommendedName>
    <alternativeName>
        <fullName>Major facilitator superfamily domain-containing protein 7A</fullName>
    </alternativeName>
</protein>
<organism>
    <name type="scientific">Mus musculus</name>
    <name type="common">Mouse</name>
    <dbReference type="NCBI Taxonomy" id="10090"/>
    <lineage>
        <taxon>Eukaryota</taxon>
        <taxon>Metazoa</taxon>
        <taxon>Chordata</taxon>
        <taxon>Craniata</taxon>
        <taxon>Vertebrata</taxon>
        <taxon>Euteleostomi</taxon>
        <taxon>Mammalia</taxon>
        <taxon>Eutheria</taxon>
        <taxon>Euarchontoglires</taxon>
        <taxon>Glires</taxon>
        <taxon>Rodentia</taxon>
        <taxon>Myomorpha</taxon>
        <taxon>Muroidea</taxon>
        <taxon>Muridae</taxon>
        <taxon>Murinae</taxon>
        <taxon>Mus</taxon>
        <taxon>Mus</taxon>
    </lineage>
</organism>
<evidence type="ECO:0000255" key="1"/>
<evidence type="ECO:0000256" key="2">
    <source>
        <dbReference type="SAM" id="MobiDB-lite"/>
    </source>
</evidence>
<evidence type="ECO:0000305" key="3"/>
<dbReference type="EMBL" id="AK029021">
    <property type="protein sequence ID" value="BAC26248.1"/>
    <property type="molecule type" value="mRNA"/>
</dbReference>
<dbReference type="EMBL" id="BC094512">
    <property type="protein sequence ID" value="AAH94512.1"/>
    <property type="molecule type" value="mRNA"/>
</dbReference>
<dbReference type="CCDS" id="CCDS19511.1"/>
<dbReference type="RefSeq" id="NP_766471.1">
    <property type="nucleotide sequence ID" value="NM_172883.3"/>
</dbReference>
<dbReference type="SMR" id="Q8CE47"/>
<dbReference type="STRING" id="10090.ENSMUSP00000031455"/>
<dbReference type="TCDB" id="2.A.1.28.2">
    <property type="family name" value="the major facilitator superfamily (mfs)"/>
</dbReference>
<dbReference type="GlyGen" id="Q8CE47">
    <property type="glycosylation" value="1 site"/>
</dbReference>
<dbReference type="iPTMnet" id="Q8CE47"/>
<dbReference type="PhosphoSitePlus" id="Q8CE47"/>
<dbReference type="PaxDb" id="10090-ENSMUSP00000031455"/>
<dbReference type="ProteomicsDB" id="256822"/>
<dbReference type="Antibodypedia" id="42992">
    <property type="antibodies" value="27 antibodies from 15 providers"/>
</dbReference>
<dbReference type="DNASU" id="243197"/>
<dbReference type="Ensembl" id="ENSMUST00000031455.5">
    <property type="protein sequence ID" value="ENSMUSP00000031455.4"/>
    <property type="gene ID" value="ENSMUSG00000029490.5"/>
</dbReference>
<dbReference type="GeneID" id="243197"/>
<dbReference type="KEGG" id="mmu:243197"/>
<dbReference type="UCSC" id="uc008yoc.1">
    <property type="organism name" value="mouse"/>
</dbReference>
<dbReference type="AGR" id="MGI:2442629"/>
<dbReference type="CTD" id="84179"/>
<dbReference type="MGI" id="MGI:2442629">
    <property type="gene designation" value="Slc49a3"/>
</dbReference>
<dbReference type="VEuPathDB" id="HostDB:ENSMUSG00000029490"/>
<dbReference type="eggNOG" id="KOG2563">
    <property type="taxonomic scope" value="Eukaryota"/>
</dbReference>
<dbReference type="GeneTree" id="ENSGT01030000234625"/>
<dbReference type="HOGENOM" id="CLU_023132_3_2_1"/>
<dbReference type="InParanoid" id="Q8CE47"/>
<dbReference type="OMA" id="STICWTG"/>
<dbReference type="OrthoDB" id="422206at2759"/>
<dbReference type="PhylomeDB" id="Q8CE47"/>
<dbReference type="TreeFam" id="TF314292"/>
<dbReference type="BioGRID-ORCS" id="243197">
    <property type="hits" value="2 hits in 78 CRISPR screens"/>
</dbReference>
<dbReference type="PRO" id="PR:Q8CE47"/>
<dbReference type="Proteomes" id="UP000000589">
    <property type="component" value="Chromosome 5"/>
</dbReference>
<dbReference type="RNAct" id="Q8CE47">
    <property type="molecule type" value="protein"/>
</dbReference>
<dbReference type="Bgee" id="ENSMUSG00000029490">
    <property type="expression patterns" value="Expressed in white adipose tissue and 45 other cell types or tissues"/>
</dbReference>
<dbReference type="ExpressionAtlas" id="Q8CE47">
    <property type="expression patterns" value="baseline and differential"/>
</dbReference>
<dbReference type="GO" id="GO:0016020">
    <property type="term" value="C:membrane"/>
    <property type="evidence" value="ECO:0007669"/>
    <property type="project" value="UniProtKB-SubCell"/>
</dbReference>
<dbReference type="GO" id="GO:0022857">
    <property type="term" value="F:transmembrane transporter activity"/>
    <property type="evidence" value="ECO:0007669"/>
    <property type="project" value="InterPro"/>
</dbReference>
<dbReference type="CDD" id="cd17399">
    <property type="entry name" value="MFS_MFSD7"/>
    <property type="match status" value="1"/>
</dbReference>
<dbReference type="Gene3D" id="1.20.1250.20">
    <property type="entry name" value="MFS general substrate transporter like domains"/>
    <property type="match status" value="2"/>
</dbReference>
<dbReference type="InterPro" id="IPR049680">
    <property type="entry name" value="FLVCR1-2_SLC49-like"/>
</dbReference>
<dbReference type="InterPro" id="IPR011701">
    <property type="entry name" value="MFS"/>
</dbReference>
<dbReference type="InterPro" id="IPR020846">
    <property type="entry name" value="MFS_dom"/>
</dbReference>
<dbReference type="InterPro" id="IPR036259">
    <property type="entry name" value="MFS_trans_sf"/>
</dbReference>
<dbReference type="PANTHER" id="PTHR10924">
    <property type="entry name" value="MAJOR FACILITATOR SUPERFAMILY PROTEIN-RELATED"/>
    <property type="match status" value="1"/>
</dbReference>
<dbReference type="PANTHER" id="PTHR10924:SF6">
    <property type="entry name" value="SOLUTE CARRIER FAMILY 49 MEMBER A3"/>
    <property type="match status" value="1"/>
</dbReference>
<dbReference type="Pfam" id="PF07690">
    <property type="entry name" value="MFS_1"/>
    <property type="match status" value="1"/>
</dbReference>
<dbReference type="SUPFAM" id="SSF103473">
    <property type="entry name" value="MFS general substrate transporter"/>
    <property type="match status" value="1"/>
</dbReference>
<dbReference type="PROSITE" id="PS50850">
    <property type="entry name" value="MFS"/>
    <property type="match status" value="1"/>
</dbReference>
<gene>
    <name type="primary">Slc49a3</name>
    <name type="synonym">Mfsd7a</name>
</gene>
<name>S49A3_MOUSE</name>
<reference key="1">
    <citation type="journal article" date="2005" name="Science">
        <title>The transcriptional landscape of the mammalian genome.</title>
        <authorList>
            <person name="Carninci P."/>
            <person name="Kasukawa T."/>
            <person name="Katayama S."/>
            <person name="Gough J."/>
            <person name="Frith M.C."/>
            <person name="Maeda N."/>
            <person name="Oyama R."/>
            <person name="Ravasi T."/>
            <person name="Lenhard B."/>
            <person name="Wells C."/>
            <person name="Kodzius R."/>
            <person name="Shimokawa K."/>
            <person name="Bajic V.B."/>
            <person name="Brenner S.E."/>
            <person name="Batalov S."/>
            <person name="Forrest A.R."/>
            <person name="Zavolan M."/>
            <person name="Davis M.J."/>
            <person name="Wilming L.G."/>
            <person name="Aidinis V."/>
            <person name="Allen J.E."/>
            <person name="Ambesi-Impiombato A."/>
            <person name="Apweiler R."/>
            <person name="Aturaliya R.N."/>
            <person name="Bailey T.L."/>
            <person name="Bansal M."/>
            <person name="Baxter L."/>
            <person name="Beisel K.W."/>
            <person name="Bersano T."/>
            <person name="Bono H."/>
            <person name="Chalk A.M."/>
            <person name="Chiu K.P."/>
            <person name="Choudhary V."/>
            <person name="Christoffels A."/>
            <person name="Clutterbuck D.R."/>
            <person name="Crowe M.L."/>
            <person name="Dalla E."/>
            <person name="Dalrymple B.P."/>
            <person name="de Bono B."/>
            <person name="Della Gatta G."/>
            <person name="di Bernardo D."/>
            <person name="Down T."/>
            <person name="Engstrom P."/>
            <person name="Fagiolini M."/>
            <person name="Faulkner G."/>
            <person name="Fletcher C.F."/>
            <person name="Fukushima T."/>
            <person name="Furuno M."/>
            <person name="Futaki S."/>
            <person name="Gariboldi M."/>
            <person name="Georgii-Hemming P."/>
            <person name="Gingeras T.R."/>
            <person name="Gojobori T."/>
            <person name="Green R.E."/>
            <person name="Gustincich S."/>
            <person name="Harbers M."/>
            <person name="Hayashi Y."/>
            <person name="Hensch T.K."/>
            <person name="Hirokawa N."/>
            <person name="Hill D."/>
            <person name="Huminiecki L."/>
            <person name="Iacono M."/>
            <person name="Ikeo K."/>
            <person name="Iwama A."/>
            <person name="Ishikawa T."/>
            <person name="Jakt M."/>
            <person name="Kanapin A."/>
            <person name="Katoh M."/>
            <person name="Kawasawa Y."/>
            <person name="Kelso J."/>
            <person name="Kitamura H."/>
            <person name="Kitano H."/>
            <person name="Kollias G."/>
            <person name="Krishnan S.P."/>
            <person name="Kruger A."/>
            <person name="Kummerfeld S.K."/>
            <person name="Kurochkin I.V."/>
            <person name="Lareau L.F."/>
            <person name="Lazarevic D."/>
            <person name="Lipovich L."/>
            <person name="Liu J."/>
            <person name="Liuni S."/>
            <person name="McWilliam S."/>
            <person name="Madan Babu M."/>
            <person name="Madera M."/>
            <person name="Marchionni L."/>
            <person name="Matsuda H."/>
            <person name="Matsuzawa S."/>
            <person name="Miki H."/>
            <person name="Mignone F."/>
            <person name="Miyake S."/>
            <person name="Morris K."/>
            <person name="Mottagui-Tabar S."/>
            <person name="Mulder N."/>
            <person name="Nakano N."/>
            <person name="Nakauchi H."/>
            <person name="Ng P."/>
            <person name="Nilsson R."/>
            <person name="Nishiguchi S."/>
            <person name="Nishikawa S."/>
            <person name="Nori F."/>
            <person name="Ohara O."/>
            <person name="Okazaki Y."/>
            <person name="Orlando V."/>
            <person name="Pang K.C."/>
            <person name="Pavan W.J."/>
            <person name="Pavesi G."/>
            <person name="Pesole G."/>
            <person name="Petrovsky N."/>
            <person name="Piazza S."/>
            <person name="Reed J."/>
            <person name="Reid J.F."/>
            <person name="Ring B.Z."/>
            <person name="Ringwald M."/>
            <person name="Rost B."/>
            <person name="Ruan Y."/>
            <person name="Salzberg S.L."/>
            <person name="Sandelin A."/>
            <person name="Schneider C."/>
            <person name="Schoenbach C."/>
            <person name="Sekiguchi K."/>
            <person name="Semple C.A."/>
            <person name="Seno S."/>
            <person name="Sessa L."/>
            <person name="Sheng Y."/>
            <person name="Shibata Y."/>
            <person name="Shimada H."/>
            <person name="Shimada K."/>
            <person name="Silva D."/>
            <person name="Sinclair B."/>
            <person name="Sperling S."/>
            <person name="Stupka E."/>
            <person name="Sugiura K."/>
            <person name="Sultana R."/>
            <person name="Takenaka Y."/>
            <person name="Taki K."/>
            <person name="Tammoja K."/>
            <person name="Tan S.L."/>
            <person name="Tang S."/>
            <person name="Taylor M.S."/>
            <person name="Tegner J."/>
            <person name="Teichmann S.A."/>
            <person name="Ueda H.R."/>
            <person name="van Nimwegen E."/>
            <person name="Verardo R."/>
            <person name="Wei C.L."/>
            <person name="Yagi K."/>
            <person name="Yamanishi H."/>
            <person name="Zabarovsky E."/>
            <person name="Zhu S."/>
            <person name="Zimmer A."/>
            <person name="Hide W."/>
            <person name="Bult C."/>
            <person name="Grimmond S.M."/>
            <person name="Teasdale R.D."/>
            <person name="Liu E.T."/>
            <person name="Brusic V."/>
            <person name="Quackenbush J."/>
            <person name="Wahlestedt C."/>
            <person name="Mattick J.S."/>
            <person name="Hume D.A."/>
            <person name="Kai C."/>
            <person name="Sasaki D."/>
            <person name="Tomaru Y."/>
            <person name="Fukuda S."/>
            <person name="Kanamori-Katayama M."/>
            <person name="Suzuki M."/>
            <person name="Aoki J."/>
            <person name="Arakawa T."/>
            <person name="Iida J."/>
            <person name="Imamura K."/>
            <person name="Itoh M."/>
            <person name="Kato T."/>
            <person name="Kawaji H."/>
            <person name="Kawagashira N."/>
            <person name="Kawashima T."/>
            <person name="Kojima M."/>
            <person name="Kondo S."/>
            <person name="Konno H."/>
            <person name="Nakano K."/>
            <person name="Ninomiya N."/>
            <person name="Nishio T."/>
            <person name="Okada M."/>
            <person name="Plessy C."/>
            <person name="Shibata K."/>
            <person name="Shiraki T."/>
            <person name="Suzuki S."/>
            <person name="Tagami M."/>
            <person name="Waki K."/>
            <person name="Watahiki A."/>
            <person name="Okamura-Oho Y."/>
            <person name="Suzuki H."/>
            <person name="Kawai J."/>
            <person name="Hayashizaki Y."/>
        </authorList>
    </citation>
    <scope>NUCLEOTIDE SEQUENCE [LARGE SCALE MRNA]</scope>
    <source>
        <strain>C57BL/6J</strain>
        <tissue>Skin</tissue>
    </source>
</reference>
<reference key="2">
    <citation type="journal article" date="2004" name="Genome Res.">
        <title>The status, quality, and expansion of the NIH full-length cDNA project: the Mammalian Gene Collection (MGC).</title>
        <authorList>
            <consortium name="The MGC Project Team"/>
        </authorList>
    </citation>
    <scope>NUCLEOTIDE SEQUENCE [LARGE SCALE MRNA]</scope>
    <source>
        <strain>FVB/N</strain>
        <tissue>Mammary gland</tissue>
    </source>
</reference>
<comment type="subcellular location">
    <subcellularLocation>
        <location evidence="3">Membrane</location>
        <topology evidence="3">Multi-pass membrane protein</topology>
    </subcellularLocation>
</comment>
<comment type="similarity">
    <text evidence="3">Belongs to the major facilitator superfamily.</text>
</comment>
<proteinExistence type="evidence at transcript level"/>
<accession>Q8CE47</accession>
<accession>Q505K1</accession>
<feature type="chain" id="PRO_0000273409" description="Solute carrier family 49 member A3">
    <location>
        <begin position="1"/>
        <end position="516"/>
    </location>
</feature>
<feature type="transmembrane region" description="Helical" evidence="1">
    <location>
        <begin position="34"/>
        <end position="54"/>
    </location>
</feature>
<feature type="transmembrane region" description="Helical" evidence="1">
    <location>
        <begin position="74"/>
        <end position="94"/>
    </location>
</feature>
<feature type="transmembrane region" description="Helical" evidence="1">
    <location>
        <begin position="104"/>
        <end position="124"/>
    </location>
</feature>
<feature type="transmembrane region" description="Helical" evidence="1">
    <location>
        <begin position="139"/>
        <end position="159"/>
    </location>
</feature>
<feature type="transmembrane region" description="Helical" evidence="1">
    <location>
        <begin position="170"/>
        <end position="190"/>
    </location>
</feature>
<feature type="transmembrane region" description="Helical" evidence="1">
    <location>
        <begin position="199"/>
        <end position="219"/>
    </location>
</feature>
<feature type="transmembrane region" description="Helical" evidence="1">
    <location>
        <begin position="253"/>
        <end position="273"/>
    </location>
</feature>
<feature type="transmembrane region" description="Helical" evidence="1">
    <location>
        <begin position="289"/>
        <end position="309"/>
    </location>
</feature>
<feature type="transmembrane region" description="Helical" evidence="1">
    <location>
        <begin position="321"/>
        <end position="341"/>
    </location>
</feature>
<feature type="transmembrane region" description="Helical" evidence="1">
    <location>
        <begin position="344"/>
        <end position="364"/>
    </location>
</feature>
<feature type="transmembrane region" description="Helical" evidence="1">
    <location>
        <begin position="382"/>
        <end position="402"/>
    </location>
</feature>
<feature type="transmembrane region" description="Helical" evidence="1">
    <location>
        <begin position="425"/>
        <end position="445"/>
    </location>
</feature>
<feature type="region of interest" description="Disordered" evidence="2">
    <location>
        <begin position="1"/>
        <end position="22"/>
    </location>
</feature>
<feature type="region of interest" description="Disordered" evidence="2">
    <location>
        <begin position="453"/>
        <end position="516"/>
    </location>
</feature>
<feature type="compositionally biased region" description="Basic and acidic residues" evidence="2">
    <location>
        <begin position="1"/>
        <end position="10"/>
    </location>
</feature>
<feature type="compositionally biased region" description="Basic and acidic residues" evidence="2">
    <location>
        <begin position="504"/>
        <end position="516"/>
    </location>
</feature>
<feature type="sequence conflict" description="In Ref. 2; AAH94512." evidence="3" ref="2">
    <original>A</original>
    <variation>S</variation>
    <location>
        <position position="210"/>
    </location>
</feature>